<evidence type="ECO:0000256" key="1">
    <source>
        <dbReference type="SAM" id="MobiDB-lite"/>
    </source>
</evidence>
<evidence type="ECO:0000269" key="2">
    <source>
    </source>
</evidence>
<evidence type="ECO:0000305" key="3"/>
<sequence length="693" mass="77621">MSTPFGLDLGNNNSVLAVARNRGIDVVVNEVSNRSTPSLVGFGPRNRYLGESGKTKQTSNVKNTVENLKRIIGLKFKDPEFDIENKFFTSKLVQLKNGKVGVEVEFGGKTHVFSATQLTAMFIDKVKHTVQEETKSSITDVCLAVPVWYSEEQRYNIADAARIAGLNPVRIVNDVTAAAVSYGVFKNDLPGPEEKPRIIGLVDIGHSTYTCSIMAFRKGEMKVLGTAYDKHFGGRDFDRAITEHFADQFKDKYKIDIRKNPKAYNRILIAAEKLKKVLSANTTAPFSVESVMDDIDVSSQLSREELEELVEPLLKRVTYPITNALAQAKLTVNDIDFVEIIGGTTRIPVLKKSISDVFGKPLSSTLNQDEAVAKGAAFICAIHSPTLRVRPFKFEDIDPYSVSYTWDKQVDDEDRLEVFPANSSYPSTKLITLHRTGDFSMKAVYTHPSKLPKGTSTTIAKWSFTGVKVPKDQDFIPVKVKLRCDPSGLHIIENAYTTEDITVQEPVPLPEDAPEDAEPQFKEVTKTIKKDVLGMTAKTFALNPVELNDLIEKENELRNQDKLVAETEDRKNALEEYIYTLRAKLDDEYSDFASDAEKEKLKNMLATTENWLYGDGDDSTKAKYIAKYEELASLGNIIRGRYLAKEEEKRQALRANQETSKMNDIAEKLAEQRRARAASDDSDDNNDENMDLD</sequence>
<protein>
    <recommendedName>
        <fullName>Heat shock protein homolog SSE2</fullName>
    </recommendedName>
</protein>
<name>HSP79_YEAST</name>
<reference key="1">
    <citation type="journal article" date="1993" name="Gene">
        <title>Isolation and characterization of SSE1 and SSE2, new members of the yeast HSP70 multigene family.</title>
        <authorList>
            <person name="Mukai H."/>
            <person name="Kuno T."/>
            <person name="Tanaka H."/>
            <person name="Hirata D."/>
            <person name="Miyakawa T."/>
            <person name="Tanaka C."/>
        </authorList>
    </citation>
    <scope>NUCLEOTIDE SEQUENCE [MRNA]</scope>
    <source>
        <strain>ATCC 204626 / S288c / A364A</strain>
    </source>
</reference>
<reference key="2">
    <citation type="journal article" date="1993" name="Mol. Biol. Cell">
        <title>Suppression of a sec63 mutation identifies a novel component of the yeast endoplasmic reticulum translocation apparatus.</title>
        <authorList>
            <person name="Kurihara T."/>
            <person name="Silver P.A."/>
        </authorList>
    </citation>
    <scope>NUCLEOTIDE SEQUENCE [GENOMIC DNA]</scope>
</reference>
<reference key="3">
    <citation type="journal article" date="1994" name="EMBO J.">
        <title>Complete DNA sequence of yeast chromosome II.</title>
        <authorList>
            <person name="Feldmann H."/>
            <person name="Aigle M."/>
            <person name="Aljinovic G."/>
            <person name="Andre B."/>
            <person name="Baclet M.C."/>
            <person name="Barthe C."/>
            <person name="Baur A."/>
            <person name="Becam A.-M."/>
            <person name="Biteau N."/>
            <person name="Boles E."/>
            <person name="Brandt T."/>
            <person name="Brendel M."/>
            <person name="Brueckner M."/>
            <person name="Bussereau F."/>
            <person name="Christiansen C."/>
            <person name="Contreras R."/>
            <person name="Crouzet M."/>
            <person name="Cziepluch C."/>
            <person name="Demolis N."/>
            <person name="Delaveau T."/>
            <person name="Doignon F."/>
            <person name="Domdey H."/>
            <person name="Duesterhus S."/>
            <person name="Dubois E."/>
            <person name="Dujon B."/>
            <person name="El Bakkoury M."/>
            <person name="Entian K.-D."/>
            <person name="Feuermann M."/>
            <person name="Fiers W."/>
            <person name="Fobo G.M."/>
            <person name="Fritz C."/>
            <person name="Gassenhuber J."/>
            <person name="Glansdorff N."/>
            <person name="Goffeau A."/>
            <person name="Grivell L.A."/>
            <person name="de Haan M."/>
            <person name="Hein C."/>
            <person name="Herbert C.J."/>
            <person name="Hollenberg C.P."/>
            <person name="Holmstroem K."/>
            <person name="Jacq C."/>
            <person name="Jacquet M."/>
            <person name="Jauniaux J.-C."/>
            <person name="Jonniaux J.-L."/>
            <person name="Kallesoee T."/>
            <person name="Kiesau P."/>
            <person name="Kirchrath L."/>
            <person name="Koetter P."/>
            <person name="Korol S."/>
            <person name="Liebl S."/>
            <person name="Logghe M."/>
            <person name="Lohan A.J.E."/>
            <person name="Louis E.J."/>
            <person name="Li Z.Y."/>
            <person name="Maat M.J."/>
            <person name="Mallet L."/>
            <person name="Mannhaupt G."/>
            <person name="Messenguy F."/>
            <person name="Miosga T."/>
            <person name="Molemans F."/>
            <person name="Mueller S."/>
            <person name="Nasr F."/>
            <person name="Obermaier B."/>
            <person name="Perea J."/>
            <person name="Pierard A."/>
            <person name="Piravandi E."/>
            <person name="Pohl F.M."/>
            <person name="Pohl T.M."/>
            <person name="Potier S."/>
            <person name="Proft M."/>
            <person name="Purnelle B."/>
            <person name="Ramezani Rad M."/>
            <person name="Rieger M."/>
            <person name="Rose M."/>
            <person name="Schaaff-Gerstenschlaeger I."/>
            <person name="Scherens B."/>
            <person name="Schwarzlose C."/>
            <person name="Skala J."/>
            <person name="Slonimski P.P."/>
            <person name="Smits P.H.M."/>
            <person name="Souciet J.-L."/>
            <person name="Steensma H.Y."/>
            <person name="Stucka R."/>
            <person name="Urrestarazu L.A."/>
            <person name="van der Aart Q.J.M."/>
            <person name="Van Dyck L."/>
            <person name="Vassarotti A."/>
            <person name="Vetter I."/>
            <person name="Vierendeels F."/>
            <person name="Vissers S."/>
            <person name="Wagner G."/>
            <person name="de Wergifosse P."/>
            <person name="Wolfe K.H."/>
            <person name="Zagulski M."/>
            <person name="Zimmermann F.K."/>
            <person name="Mewes H.-W."/>
            <person name="Kleine K."/>
        </authorList>
    </citation>
    <scope>NUCLEOTIDE SEQUENCE [LARGE SCALE GENOMIC DNA]</scope>
    <source>
        <strain>ATCC 204508 / S288c</strain>
    </source>
</reference>
<reference key="4">
    <citation type="journal article" date="2014" name="G3 (Bethesda)">
        <title>The reference genome sequence of Saccharomyces cerevisiae: Then and now.</title>
        <authorList>
            <person name="Engel S.R."/>
            <person name="Dietrich F.S."/>
            <person name="Fisk D.G."/>
            <person name="Binkley G."/>
            <person name="Balakrishnan R."/>
            <person name="Costanzo M.C."/>
            <person name="Dwight S.S."/>
            <person name="Hitz B.C."/>
            <person name="Karra K."/>
            <person name="Nash R.S."/>
            <person name="Weng S."/>
            <person name="Wong E.D."/>
            <person name="Lloyd P."/>
            <person name="Skrzypek M.S."/>
            <person name="Miyasato S.R."/>
            <person name="Simison M."/>
            <person name="Cherry J.M."/>
        </authorList>
    </citation>
    <scope>GENOME REANNOTATION</scope>
    <source>
        <strain>ATCC 204508 / S288c</strain>
    </source>
</reference>
<reference key="5">
    <citation type="journal article" date="2007" name="Genome Res.">
        <title>Approaching a complete repository of sequence-verified protein-encoding clones for Saccharomyces cerevisiae.</title>
        <authorList>
            <person name="Hu Y."/>
            <person name="Rolfs A."/>
            <person name="Bhullar B."/>
            <person name="Murthy T.V.S."/>
            <person name="Zhu C."/>
            <person name="Berger M.F."/>
            <person name="Camargo A.A."/>
            <person name="Kelley F."/>
            <person name="McCarron S."/>
            <person name="Jepson D."/>
            <person name="Richardson A."/>
            <person name="Raphael J."/>
            <person name="Moreira D."/>
            <person name="Taycher E."/>
            <person name="Zuo D."/>
            <person name="Mohr S."/>
            <person name="Kane M.F."/>
            <person name="Williamson J."/>
            <person name="Simpson A.J.G."/>
            <person name="Bulyk M.L."/>
            <person name="Harlow E."/>
            <person name="Marsischky G."/>
            <person name="Kolodner R.D."/>
            <person name="LaBaer J."/>
        </authorList>
    </citation>
    <scope>NUCLEOTIDE SEQUENCE [GENOMIC DNA]</scope>
    <source>
        <strain>ATCC 204508 / S288c</strain>
    </source>
</reference>
<reference key="6">
    <citation type="journal article" date="2003" name="Nature">
        <title>Global analysis of protein expression in yeast.</title>
        <authorList>
            <person name="Ghaemmaghami S."/>
            <person name="Huh W.-K."/>
            <person name="Bower K."/>
            <person name="Howson R.W."/>
            <person name="Belle A."/>
            <person name="Dephoure N."/>
            <person name="O'Shea E.K."/>
            <person name="Weissman J.S."/>
        </authorList>
    </citation>
    <scope>LEVEL OF PROTEIN EXPRESSION [LARGE SCALE ANALYSIS]</scope>
</reference>
<accession>P32590</accession>
<accession>D6VQG5</accession>
<proteinExistence type="evidence at protein level"/>
<dbReference type="EMBL" id="D38369">
    <property type="protein sequence ID" value="BAA07450.1"/>
    <property type="molecule type" value="mRNA"/>
</dbReference>
<dbReference type="EMBL" id="D38371">
    <property type="protein sequence ID" value="BAA07452.1"/>
    <property type="molecule type" value="Genomic_DNA"/>
</dbReference>
<dbReference type="EMBL" id="X72224">
    <property type="protein sequence ID" value="CAA51027.1"/>
    <property type="molecule type" value="Genomic_DNA"/>
</dbReference>
<dbReference type="EMBL" id="Z36038">
    <property type="protein sequence ID" value="CAA85130.1"/>
    <property type="molecule type" value="Genomic_DNA"/>
</dbReference>
<dbReference type="EMBL" id="AY692880">
    <property type="protein sequence ID" value="AAT92899.1"/>
    <property type="molecule type" value="Genomic_DNA"/>
</dbReference>
<dbReference type="EMBL" id="BK006936">
    <property type="protein sequence ID" value="DAA07285.1"/>
    <property type="molecule type" value="Genomic_DNA"/>
</dbReference>
<dbReference type="PIR" id="JN0843">
    <property type="entry name" value="JN0843"/>
</dbReference>
<dbReference type="RefSeq" id="NP_009728.1">
    <property type="nucleotide sequence ID" value="NM_001178517.1"/>
</dbReference>
<dbReference type="SMR" id="P32590"/>
<dbReference type="BioGRID" id="32869">
    <property type="interactions" value="115"/>
</dbReference>
<dbReference type="DIP" id="DIP-4862N"/>
<dbReference type="FunCoup" id="P32590">
    <property type="interactions" value="1589"/>
</dbReference>
<dbReference type="IntAct" id="P32590">
    <property type="interactions" value="30"/>
</dbReference>
<dbReference type="MINT" id="P32590"/>
<dbReference type="STRING" id="4932.YBR169C"/>
<dbReference type="iPTMnet" id="P32590"/>
<dbReference type="PaxDb" id="4932-YBR169C"/>
<dbReference type="PeptideAtlas" id="P32590"/>
<dbReference type="EnsemblFungi" id="YBR169C_mRNA">
    <property type="protein sequence ID" value="YBR169C"/>
    <property type="gene ID" value="YBR169C"/>
</dbReference>
<dbReference type="GeneID" id="852467"/>
<dbReference type="KEGG" id="sce:YBR169C"/>
<dbReference type="AGR" id="SGD:S000000373"/>
<dbReference type="SGD" id="S000000373">
    <property type="gene designation" value="SSE2"/>
</dbReference>
<dbReference type="VEuPathDB" id="FungiDB:YBR169C"/>
<dbReference type="eggNOG" id="KOG0103">
    <property type="taxonomic scope" value="Eukaryota"/>
</dbReference>
<dbReference type="GeneTree" id="ENSGT00940000168707"/>
<dbReference type="HOGENOM" id="CLU_005965_5_1_1"/>
<dbReference type="InParanoid" id="P32590"/>
<dbReference type="OMA" id="KEYECIE"/>
<dbReference type="OrthoDB" id="434160at2759"/>
<dbReference type="BioCyc" id="YEAST:G3O-29117-MONOMER"/>
<dbReference type="Reactome" id="R-SCE-3371453">
    <property type="pathway name" value="Regulation of HSF1-mediated heat shock response"/>
</dbReference>
<dbReference type="BioGRID-ORCS" id="852467">
    <property type="hits" value="1 hit in 10 CRISPR screens"/>
</dbReference>
<dbReference type="PRO" id="PR:P32590"/>
<dbReference type="Proteomes" id="UP000002311">
    <property type="component" value="Chromosome II"/>
</dbReference>
<dbReference type="RNAct" id="P32590">
    <property type="molecule type" value="protein"/>
</dbReference>
<dbReference type="GO" id="GO:0005737">
    <property type="term" value="C:cytoplasm"/>
    <property type="evidence" value="ECO:0007005"/>
    <property type="project" value="SGD"/>
</dbReference>
<dbReference type="GO" id="GO:0005829">
    <property type="term" value="C:cytosol"/>
    <property type="evidence" value="ECO:0000318"/>
    <property type="project" value="GO_Central"/>
</dbReference>
<dbReference type="GO" id="GO:0005634">
    <property type="term" value="C:nucleus"/>
    <property type="evidence" value="ECO:0000318"/>
    <property type="project" value="GO_Central"/>
</dbReference>
<dbReference type="GO" id="GO:0000774">
    <property type="term" value="F:adenyl-nucleotide exchange factor activity"/>
    <property type="evidence" value="ECO:0000314"/>
    <property type="project" value="SGD"/>
</dbReference>
<dbReference type="GO" id="GO:0005524">
    <property type="term" value="F:ATP binding"/>
    <property type="evidence" value="ECO:0007669"/>
    <property type="project" value="UniProtKB-KW"/>
</dbReference>
<dbReference type="GO" id="GO:0140662">
    <property type="term" value="F:ATP-dependent protein folding chaperone"/>
    <property type="evidence" value="ECO:0007669"/>
    <property type="project" value="InterPro"/>
</dbReference>
<dbReference type="GO" id="GO:0005516">
    <property type="term" value="F:calmodulin binding"/>
    <property type="evidence" value="ECO:0007669"/>
    <property type="project" value="UniProtKB-KW"/>
</dbReference>
<dbReference type="GO" id="GO:0010499">
    <property type="term" value="P:proteasomal ubiquitin-independent protein catabolic process"/>
    <property type="evidence" value="ECO:0000316"/>
    <property type="project" value="SGD"/>
</dbReference>
<dbReference type="GO" id="GO:0043161">
    <property type="term" value="P:proteasome-mediated ubiquitin-dependent protein catabolic process"/>
    <property type="evidence" value="ECO:0000316"/>
    <property type="project" value="SGD"/>
</dbReference>
<dbReference type="GO" id="GO:0006457">
    <property type="term" value="P:protein folding"/>
    <property type="evidence" value="ECO:0000318"/>
    <property type="project" value="GO_Central"/>
</dbReference>
<dbReference type="GO" id="GO:0042026">
    <property type="term" value="P:protein refolding"/>
    <property type="evidence" value="ECO:0000316"/>
    <property type="project" value="SGD"/>
</dbReference>
<dbReference type="FunFam" id="1.20.1270.10:FF:000002">
    <property type="entry name" value="Heat shock 70 kDa protein 4"/>
    <property type="match status" value="1"/>
</dbReference>
<dbReference type="FunFam" id="3.30.30.30:FF:000002">
    <property type="entry name" value="Heat shock 70 kDa protein 4"/>
    <property type="match status" value="1"/>
</dbReference>
<dbReference type="FunFam" id="3.30.420.40:FF:000171">
    <property type="entry name" value="Heat shock 70 kDa protein 4"/>
    <property type="match status" value="2"/>
</dbReference>
<dbReference type="FunFam" id="3.90.640.10:FF:000004">
    <property type="entry name" value="Heat shock 70 kDa protein 4"/>
    <property type="match status" value="1"/>
</dbReference>
<dbReference type="FunFam" id="2.60.34.10:FF:000020">
    <property type="entry name" value="Heat shock SSE1"/>
    <property type="match status" value="1"/>
</dbReference>
<dbReference type="Gene3D" id="1.20.1270.10">
    <property type="match status" value="1"/>
</dbReference>
<dbReference type="Gene3D" id="3.30.30.30">
    <property type="match status" value="1"/>
</dbReference>
<dbReference type="Gene3D" id="3.30.420.40">
    <property type="match status" value="2"/>
</dbReference>
<dbReference type="Gene3D" id="3.90.640.10">
    <property type="entry name" value="Actin, Chain A, domain 4"/>
    <property type="match status" value="1"/>
</dbReference>
<dbReference type="Gene3D" id="2.60.34.10">
    <property type="entry name" value="Substrate Binding Domain Of DNAk, Chain A, domain 1"/>
    <property type="match status" value="1"/>
</dbReference>
<dbReference type="InterPro" id="IPR043129">
    <property type="entry name" value="ATPase_NBD"/>
</dbReference>
<dbReference type="InterPro" id="IPR018181">
    <property type="entry name" value="Heat_shock_70_CS"/>
</dbReference>
<dbReference type="InterPro" id="IPR029048">
    <property type="entry name" value="HSP70_C_sf"/>
</dbReference>
<dbReference type="InterPro" id="IPR029047">
    <property type="entry name" value="HSP70_peptide-bd_sf"/>
</dbReference>
<dbReference type="InterPro" id="IPR013126">
    <property type="entry name" value="Hsp_70_fam"/>
</dbReference>
<dbReference type="PANTHER" id="PTHR45639:SF4">
    <property type="entry name" value="HSC70CB, ISOFORM G"/>
    <property type="match status" value="1"/>
</dbReference>
<dbReference type="PANTHER" id="PTHR45639">
    <property type="entry name" value="HSC70CB, ISOFORM G-RELATED"/>
    <property type="match status" value="1"/>
</dbReference>
<dbReference type="Pfam" id="PF00012">
    <property type="entry name" value="HSP70"/>
    <property type="match status" value="1"/>
</dbReference>
<dbReference type="PRINTS" id="PR00301">
    <property type="entry name" value="HEATSHOCK70"/>
</dbReference>
<dbReference type="SUPFAM" id="SSF53067">
    <property type="entry name" value="Actin-like ATPase domain"/>
    <property type="match status" value="2"/>
</dbReference>
<dbReference type="SUPFAM" id="SSF100934">
    <property type="entry name" value="Heat shock protein 70kD (HSP70), C-terminal subdomain"/>
    <property type="match status" value="1"/>
</dbReference>
<dbReference type="SUPFAM" id="SSF100920">
    <property type="entry name" value="Heat shock protein 70kD (HSP70), peptide-binding domain"/>
    <property type="match status" value="1"/>
</dbReference>
<dbReference type="PROSITE" id="PS00329">
    <property type="entry name" value="HSP70_2"/>
    <property type="match status" value="1"/>
</dbReference>
<dbReference type="PROSITE" id="PS01036">
    <property type="entry name" value="HSP70_3"/>
    <property type="match status" value="1"/>
</dbReference>
<organism>
    <name type="scientific">Saccharomyces cerevisiae (strain ATCC 204508 / S288c)</name>
    <name type="common">Baker's yeast</name>
    <dbReference type="NCBI Taxonomy" id="559292"/>
    <lineage>
        <taxon>Eukaryota</taxon>
        <taxon>Fungi</taxon>
        <taxon>Dikarya</taxon>
        <taxon>Ascomycota</taxon>
        <taxon>Saccharomycotina</taxon>
        <taxon>Saccharomycetes</taxon>
        <taxon>Saccharomycetales</taxon>
        <taxon>Saccharomycetaceae</taxon>
        <taxon>Saccharomyces</taxon>
    </lineage>
</organism>
<feature type="chain" id="PRO_0000078397" description="Heat shock protein homolog SSE2">
    <location>
        <begin position="1"/>
        <end position="693"/>
    </location>
</feature>
<feature type="region of interest" description="Disordered" evidence="1">
    <location>
        <begin position="653"/>
        <end position="693"/>
    </location>
</feature>
<feature type="compositionally biased region" description="Basic and acidic residues" evidence="1">
    <location>
        <begin position="664"/>
        <end position="679"/>
    </location>
</feature>
<feature type="compositionally biased region" description="Acidic residues" evidence="1">
    <location>
        <begin position="680"/>
        <end position="693"/>
    </location>
</feature>
<feature type="sequence conflict" description="In Ref. 2; CAA51027." evidence="3" ref="2">
    <location>
        <begin position="160"/>
        <end position="167"/>
    </location>
</feature>
<keyword id="KW-0067">ATP-binding</keyword>
<keyword id="KW-0112">Calmodulin-binding</keyword>
<keyword id="KW-0547">Nucleotide-binding</keyword>
<keyword id="KW-1185">Reference proteome</keyword>
<keyword id="KW-0346">Stress response</keyword>
<comment type="function">
    <text>Has a calcium-dependent calmodulin-binding activity.</text>
</comment>
<comment type="interaction">
    <interactant intactId="EBI-8655">
        <id>P32590</id>
    </interactant>
    <interactant intactId="EBI-17244">
        <id>P25294</id>
        <label>SIS1</label>
    </interactant>
    <organismsDiffer>false</organismsDiffer>
    <experiments>2</experiments>
</comment>
<comment type="induction">
    <text>By upshift to 37 degrees Celsius.</text>
</comment>
<comment type="miscellaneous">
    <text evidence="2">Present with 6300 molecules/cell in log phase SD medium.</text>
</comment>
<comment type="similarity">
    <text evidence="3">Belongs to the heat shock protein 70 family.</text>
</comment>
<gene>
    <name type="primary">SSE2</name>
    <name type="synonym">HSP</name>
    <name type="ordered locus">YBR169C</name>
    <name type="ORF">YBR1221</name>
</gene>